<accession>P68644</accession>
<accession>P31575</accession>
<accession>P75626</accession>
<sequence length="428" mass="45703">MSEDIFDAIIVGAGLAGSVAALVLAREGAQVLVIERGNSAGAKNVTGGRLYAHSLEHIIPGFADSAPVERLITHEKLAFMTEKSAMTMDYCNGDETSPSQRSYSVLRSKFDAWLMEQAEEAGAQLITGIRVDNLVQRDGKVVGVEADGDVIEAKTVILADGVNSILAEKLGMAKRVKPTDVAVGVKELIELPKSVIEDRFQLQGNQGAACLFAGSPTDGLMGGGFLYTNENTLSLGLVCGLHHLHDAKKSVPQMLEDFKQHPAVAPLIAGGKLVEYSAHVVPEAGINMLPELVGDGVLIAGDAAGMCMNLGFTIRGMDLAIAAGEAAAKTVLSAMKSDDFSKQKLAEYRQHLESGPLRDMRMYQKLPAFLDNPRMFSGYPELAVGVARDLFTIDGSAPELMRKKILRHGKKVGFINLIKDGMKGVTVL</sequence>
<reference key="1">
    <citation type="journal article" date="1992" name="Nucleic Acids Res.">
        <title>Systematic sequencing of the Escherichia coli genome: analysis of the 0-2.4 min region.</title>
        <authorList>
            <person name="Yura T."/>
            <person name="Mori H."/>
            <person name="Nagai H."/>
            <person name="Nagata T."/>
            <person name="Ishihama A."/>
            <person name="Fujita N."/>
            <person name="Isono K."/>
            <person name="Mizobuchi K."/>
            <person name="Nakata A."/>
        </authorList>
    </citation>
    <scope>NUCLEOTIDE SEQUENCE [LARGE SCALE GENOMIC DNA]</scope>
    <source>
        <strain>K12</strain>
    </source>
</reference>
<reference key="2">
    <citation type="journal article" date="1997" name="Science">
        <title>The complete genome sequence of Escherichia coli K-12.</title>
        <authorList>
            <person name="Blattner F.R."/>
            <person name="Plunkett G. III"/>
            <person name="Bloch C.A."/>
            <person name="Perna N.T."/>
            <person name="Burland V."/>
            <person name="Riley M."/>
            <person name="Collado-Vides J."/>
            <person name="Glasner J.D."/>
            <person name="Rode C.K."/>
            <person name="Mayhew G.F."/>
            <person name="Gregor J."/>
            <person name="Davis N.W."/>
            <person name="Kirkpatrick H.A."/>
            <person name="Goeden M.A."/>
            <person name="Rose D.J."/>
            <person name="Mau B."/>
            <person name="Shao Y."/>
        </authorList>
    </citation>
    <scope>NUCLEOTIDE SEQUENCE [LARGE SCALE GENOMIC DNA]</scope>
    <source>
        <strain>K12 / MG1655 / ATCC 47076</strain>
    </source>
</reference>
<reference key="3">
    <citation type="journal article" date="2006" name="Mol. Syst. Biol.">
        <title>Highly accurate genome sequences of Escherichia coli K-12 strains MG1655 and W3110.</title>
        <authorList>
            <person name="Hayashi K."/>
            <person name="Morooka N."/>
            <person name="Yamamoto Y."/>
            <person name="Fujita K."/>
            <person name="Isono K."/>
            <person name="Choi S."/>
            <person name="Ohtsubo E."/>
            <person name="Baba T."/>
            <person name="Wanner B.L."/>
            <person name="Mori H."/>
            <person name="Horiuchi T."/>
        </authorList>
    </citation>
    <scope>NUCLEOTIDE SEQUENCE [LARGE SCALE GENOMIC DNA]</scope>
    <scope>SEQUENCE REVISION TO 64; 280 AND 310</scope>
    <source>
        <strain>K12 / W3110 / ATCC 27325 / DSM 5911</strain>
    </source>
</reference>
<reference key="4">
    <citation type="journal article" date="1995" name="J. Basic Microbiol.">
        <title>The fix Escherichia coli region contains four genes related to carnitine metabolism.</title>
        <authorList>
            <person name="Eichler K."/>
            <person name="Buchet A."/>
            <person name="Bourgis F."/>
            <person name="Kleber H.-P."/>
            <person name="Mandrand-Berthelot M.-A."/>
        </authorList>
    </citation>
    <scope>NUCLEOTIDE SEQUENCE [GENOMIC DNA] OF 1-188</scope>
    <source>
        <strain>O44:K74</strain>
    </source>
</reference>
<reference key="5">
    <citation type="journal article" date="2002" name="J. Bacteriol.">
        <title>The fixA and fixB genes are necessary for anaerobic carnitine reduction in Escherichia coli.</title>
        <authorList>
            <person name="Walt A."/>
            <person name="Kahn M.L."/>
        </authorList>
    </citation>
    <scope>PROBABLE FUNCTION</scope>
    <source>
        <strain>K12 / BW25113</strain>
    </source>
</reference>
<comment type="function">
    <text>Could be part of an electron transfer system required for anaerobic carnitine reduction.</text>
</comment>
<comment type="cofactor">
    <cofactor evidence="1">
        <name>FAD</name>
        <dbReference type="ChEBI" id="CHEBI:57692"/>
    </cofactor>
</comment>
<comment type="similarity">
    <text evidence="1">Belongs to the ETF-QO/FixC family.</text>
</comment>
<proteinExistence type="inferred from homology"/>
<organism>
    <name type="scientific">Escherichia coli (strain K12)</name>
    <dbReference type="NCBI Taxonomy" id="83333"/>
    <lineage>
        <taxon>Bacteria</taxon>
        <taxon>Pseudomonadati</taxon>
        <taxon>Pseudomonadota</taxon>
        <taxon>Gammaproteobacteria</taxon>
        <taxon>Enterobacterales</taxon>
        <taxon>Enterobacteriaceae</taxon>
        <taxon>Escherichia</taxon>
    </lineage>
</organism>
<keyword id="KW-0249">Electron transport</keyword>
<keyword id="KW-0274">FAD</keyword>
<keyword id="KW-0285">Flavoprotein</keyword>
<keyword id="KW-0560">Oxidoreductase</keyword>
<keyword id="KW-1185">Reference proteome</keyword>
<keyword id="KW-0813">Transport</keyword>
<name>FIXC_ECOLI</name>
<feature type="chain" id="PRO_0000200690" description="Protein FixC">
    <location>
        <begin position="1"/>
        <end position="428"/>
    </location>
</feature>
<feature type="sequence conflict" description="In Ref. 4." evidence="1" ref="4">
    <original>MSE</original>
    <variation>MT</variation>
    <location>
        <begin position="1"/>
        <end position="3"/>
    </location>
</feature>
<feature type="sequence conflict" description="In Ref. 1; CAA50799." evidence="1" ref="1">
    <original>D</original>
    <variation>E</variation>
    <location>
        <position position="64"/>
    </location>
</feature>
<gene>
    <name type="primary">fixC</name>
    <name type="synonym">yaaS</name>
    <name type="ordered locus">b0043</name>
    <name type="ordered locus">JW0042</name>
</gene>
<protein>
    <recommendedName>
        <fullName>Protein FixC</fullName>
    </recommendedName>
</protein>
<evidence type="ECO:0000305" key="1"/>
<dbReference type="EMBL" id="U00096">
    <property type="protein sequence ID" value="AAC73154.1"/>
    <property type="molecule type" value="Genomic_DNA"/>
</dbReference>
<dbReference type="EMBL" id="AP009048">
    <property type="protein sequence ID" value="BAB96611.2"/>
    <property type="molecule type" value="Genomic_DNA"/>
</dbReference>
<dbReference type="EMBL" id="X71977">
    <property type="protein sequence ID" value="CAA50799.1"/>
    <property type="molecule type" value="Genomic_DNA"/>
</dbReference>
<dbReference type="PIR" id="C64725">
    <property type="entry name" value="C64725"/>
</dbReference>
<dbReference type="RefSeq" id="NP_414585.1">
    <property type="nucleotide sequence ID" value="NC_000913.3"/>
</dbReference>
<dbReference type="RefSeq" id="WP_001287715.1">
    <property type="nucleotide sequence ID" value="NZ_STEB01000010.1"/>
</dbReference>
<dbReference type="SMR" id="P68644"/>
<dbReference type="BioGRID" id="4262204">
    <property type="interactions" value="15"/>
</dbReference>
<dbReference type="BioGRID" id="853217">
    <property type="interactions" value="1"/>
</dbReference>
<dbReference type="FunCoup" id="P68644">
    <property type="interactions" value="755"/>
</dbReference>
<dbReference type="IntAct" id="P68644">
    <property type="interactions" value="8"/>
</dbReference>
<dbReference type="STRING" id="511145.b0043"/>
<dbReference type="PaxDb" id="511145-b0043"/>
<dbReference type="EnsemblBacteria" id="AAC73154">
    <property type="protein sequence ID" value="AAC73154"/>
    <property type="gene ID" value="b0043"/>
</dbReference>
<dbReference type="GeneID" id="948958"/>
<dbReference type="KEGG" id="ecj:JW0042"/>
<dbReference type="KEGG" id="eco:b0043"/>
<dbReference type="KEGG" id="ecoc:C3026_00225"/>
<dbReference type="PATRIC" id="fig|1411691.4.peg.2240"/>
<dbReference type="EchoBASE" id="EB1525"/>
<dbReference type="eggNOG" id="COG0644">
    <property type="taxonomic scope" value="Bacteria"/>
</dbReference>
<dbReference type="HOGENOM" id="CLU_050977_0_0_6"/>
<dbReference type="InParanoid" id="P68644"/>
<dbReference type="OMA" id="KPNRYTI"/>
<dbReference type="OrthoDB" id="103324at2"/>
<dbReference type="PhylomeDB" id="P68644"/>
<dbReference type="BioCyc" id="EcoCyc:EG11564-MONOMER"/>
<dbReference type="PRO" id="PR:P68644"/>
<dbReference type="Proteomes" id="UP000000625">
    <property type="component" value="Chromosome"/>
</dbReference>
<dbReference type="GO" id="GO:0071949">
    <property type="term" value="F:FAD binding"/>
    <property type="evidence" value="ECO:0007669"/>
    <property type="project" value="InterPro"/>
</dbReference>
<dbReference type="GO" id="GO:0016491">
    <property type="term" value="F:oxidoreductase activity"/>
    <property type="evidence" value="ECO:0007669"/>
    <property type="project" value="UniProtKB-KW"/>
</dbReference>
<dbReference type="GO" id="GO:0009437">
    <property type="term" value="P:carnitine metabolic process"/>
    <property type="evidence" value="ECO:0000270"/>
    <property type="project" value="EcoliWiki"/>
</dbReference>
<dbReference type="FunFam" id="3.50.50.60:FF:000120">
    <property type="entry name" value="Putative oxidoreductase FixC"/>
    <property type="match status" value="1"/>
</dbReference>
<dbReference type="Gene3D" id="3.50.50.60">
    <property type="entry name" value="FAD/NAD(P)-binding domain"/>
    <property type="match status" value="1"/>
</dbReference>
<dbReference type="InterPro" id="IPR002938">
    <property type="entry name" value="FAD-bd"/>
</dbReference>
<dbReference type="InterPro" id="IPR036188">
    <property type="entry name" value="FAD/NAD-bd_sf"/>
</dbReference>
<dbReference type="InterPro" id="IPR039651">
    <property type="entry name" value="FixC-like"/>
</dbReference>
<dbReference type="NCBIfam" id="NF007450">
    <property type="entry name" value="PRK10015.1"/>
    <property type="match status" value="1"/>
</dbReference>
<dbReference type="NCBIfam" id="NF007542">
    <property type="entry name" value="PRK10157.1"/>
    <property type="match status" value="1"/>
</dbReference>
<dbReference type="PANTHER" id="PTHR43624">
    <property type="entry name" value="ELECTRON TRANSFER FLAVOPROTEIN-QUINONE OXIDOREDUCTASE YDIS-RELATED"/>
    <property type="match status" value="1"/>
</dbReference>
<dbReference type="PANTHER" id="PTHR43624:SF1">
    <property type="entry name" value="PROTEIN FIXC"/>
    <property type="match status" value="1"/>
</dbReference>
<dbReference type="Pfam" id="PF01494">
    <property type="entry name" value="FAD_binding_3"/>
    <property type="match status" value="1"/>
</dbReference>
<dbReference type="PRINTS" id="PR00420">
    <property type="entry name" value="RNGMNOXGNASE"/>
</dbReference>
<dbReference type="SUPFAM" id="SSF54373">
    <property type="entry name" value="FAD-linked reductases, C-terminal domain"/>
    <property type="match status" value="1"/>
</dbReference>
<dbReference type="SUPFAM" id="SSF51905">
    <property type="entry name" value="FAD/NAD(P)-binding domain"/>
    <property type="match status" value="1"/>
</dbReference>